<organism>
    <name type="scientific">Buchnera aphidicola subsp. Acyrthosiphon pisum (strain APS)</name>
    <name type="common">Acyrthosiphon pisum symbiotic bacterium</name>
    <dbReference type="NCBI Taxonomy" id="107806"/>
    <lineage>
        <taxon>Bacteria</taxon>
        <taxon>Pseudomonadati</taxon>
        <taxon>Pseudomonadota</taxon>
        <taxon>Gammaproteobacteria</taxon>
        <taxon>Enterobacterales</taxon>
        <taxon>Erwiniaceae</taxon>
        <taxon>Buchnera</taxon>
    </lineage>
</organism>
<name>GSH1_BUCAI</name>
<proteinExistence type="inferred from homology"/>
<keyword id="KW-0067">ATP-binding</keyword>
<keyword id="KW-0317">Glutathione biosynthesis</keyword>
<keyword id="KW-0436">Ligase</keyword>
<keyword id="KW-0547">Nucleotide-binding</keyword>
<keyword id="KW-1185">Reference proteome</keyword>
<dbReference type="EC" id="6.3.2.2"/>
<dbReference type="EMBL" id="BA000003">
    <property type="protein sequence ID" value="BAB13108.1"/>
    <property type="molecule type" value="Genomic_DNA"/>
</dbReference>
<dbReference type="RefSeq" id="NP_240222.1">
    <property type="nucleotide sequence ID" value="NC_002528.1"/>
</dbReference>
<dbReference type="RefSeq" id="WP_010896101.1">
    <property type="nucleotide sequence ID" value="NC_002528.1"/>
</dbReference>
<dbReference type="SMR" id="P57485"/>
<dbReference type="STRING" id="563178.BUAP5A_400"/>
<dbReference type="EnsemblBacteria" id="BAB13108">
    <property type="protein sequence ID" value="BAB13108"/>
    <property type="gene ID" value="BAB13108"/>
</dbReference>
<dbReference type="KEGG" id="buc:BU407"/>
<dbReference type="PATRIC" id="fig|107806.10.peg.419"/>
<dbReference type="eggNOG" id="COG2918">
    <property type="taxonomic scope" value="Bacteria"/>
</dbReference>
<dbReference type="HOGENOM" id="CLU_020728_3_0_6"/>
<dbReference type="UniPathway" id="UPA00142">
    <property type="reaction ID" value="UER00209"/>
</dbReference>
<dbReference type="Proteomes" id="UP000001806">
    <property type="component" value="Chromosome"/>
</dbReference>
<dbReference type="GO" id="GO:0005829">
    <property type="term" value="C:cytosol"/>
    <property type="evidence" value="ECO:0007669"/>
    <property type="project" value="TreeGrafter"/>
</dbReference>
<dbReference type="GO" id="GO:0005524">
    <property type="term" value="F:ATP binding"/>
    <property type="evidence" value="ECO:0007669"/>
    <property type="project" value="UniProtKB-KW"/>
</dbReference>
<dbReference type="GO" id="GO:0004357">
    <property type="term" value="F:glutamate-cysteine ligase activity"/>
    <property type="evidence" value="ECO:0007669"/>
    <property type="project" value="UniProtKB-UniRule"/>
</dbReference>
<dbReference type="GO" id="GO:0046872">
    <property type="term" value="F:metal ion binding"/>
    <property type="evidence" value="ECO:0007669"/>
    <property type="project" value="TreeGrafter"/>
</dbReference>
<dbReference type="GO" id="GO:0006750">
    <property type="term" value="P:glutathione biosynthetic process"/>
    <property type="evidence" value="ECO:0007669"/>
    <property type="project" value="UniProtKB-UniRule"/>
</dbReference>
<dbReference type="Gene3D" id="3.30.590.20">
    <property type="match status" value="1"/>
</dbReference>
<dbReference type="HAMAP" id="MF_00578">
    <property type="entry name" value="Glu_cys_ligase"/>
    <property type="match status" value="1"/>
</dbReference>
<dbReference type="InterPro" id="IPR014746">
    <property type="entry name" value="Gln_synth/guanido_kin_cat_dom"/>
</dbReference>
<dbReference type="InterPro" id="IPR007370">
    <property type="entry name" value="Glu_cys_ligase"/>
</dbReference>
<dbReference type="InterPro" id="IPR006334">
    <property type="entry name" value="Glut_cys_ligase"/>
</dbReference>
<dbReference type="NCBIfam" id="TIGR01434">
    <property type="entry name" value="glu_cys_ligase"/>
    <property type="match status" value="1"/>
</dbReference>
<dbReference type="PANTHER" id="PTHR38761">
    <property type="entry name" value="GLUTAMATE--CYSTEINE LIGASE"/>
    <property type="match status" value="1"/>
</dbReference>
<dbReference type="PANTHER" id="PTHR38761:SF1">
    <property type="entry name" value="GLUTAMATE--CYSTEINE LIGASE"/>
    <property type="match status" value="1"/>
</dbReference>
<dbReference type="Pfam" id="PF04262">
    <property type="entry name" value="Glu_cys_ligase"/>
    <property type="match status" value="1"/>
</dbReference>
<dbReference type="SUPFAM" id="SSF55931">
    <property type="entry name" value="Glutamine synthetase/guanido kinase"/>
    <property type="match status" value="1"/>
</dbReference>
<comment type="catalytic activity">
    <reaction>
        <text>L-cysteine + L-glutamate + ATP = gamma-L-glutamyl-L-cysteine + ADP + phosphate + H(+)</text>
        <dbReference type="Rhea" id="RHEA:13285"/>
        <dbReference type="ChEBI" id="CHEBI:15378"/>
        <dbReference type="ChEBI" id="CHEBI:29985"/>
        <dbReference type="ChEBI" id="CHEBI:30616"/>
        <dbReference type="ChEBI" id="CHEBI:35235"/>
        <dbReference type="ChEBI" id="CHEBI:43474"/>
        <dbReference type="ChEBI" id="CHEBI:58173"/>
        <dbReference type="ChEBI" id="CHEBI:456216"/>
        <dbReference type="EC" id="6.3.2.2"/>
    </reaction>
</comment>
<comment type="pathway">
    <text>Sulfur metabolism; glutathione biosynthesis; glutathione from L-cysteine and L-glutamate: step 1/2.</text>
</comment>
<comment type="similarity">
    <text evidence="1">Belongs to the glutamate--cysteine ligase type 1 family. Type 1 subfamily.</text>
</comment>
<evidence type="ECO:0000305" key="1"/>
<reference key="1">
    <citation type="journal article" date="2000" name="Nature">
        <title>Genome sequence of the endocellular bacterial symbiont of aphids Buchnera sp. APS.</title>
        <authorList>
            <person name="Shigenobu S."/>
            <person name="Watanabe H."/>
            <person name="Hattori M."/>
            <person name="Sakaki Y."/>
            <person name="Ishikawa H."/>
        </authorList>
    </citation>
    <scope>NUCLEOTIDE SEQUENCE [LARGE SCALE GENOMIC DNA]</scope>
    <source>
        <strain>APS</strain>
    </source>
</reference>
<sequence length="518" mass="60979">MIEDISKKIAWLKKNPKMLKGIFRGIERETLRIQKNGHFSKTIHPYLIGSSLTHKWITTDFSENLLEFITPTSDNIDYLLSFLTDLHSFTASKIKNERMWPFSIPYCFNDQTNIQIAQYGKSNIGKMKTTYRIGLKNRYGDLINTISGIHYNFSLPLFFWTNWENNQNKKNNTDLISSGYLNLIRNYYRFGWIVPYLFGSSPAISSFFLKNTKKKYKFKKNKEDIFYLPWSTSLRLSDIGYSNTNILDLNIMFNDFNEYIESFQNALKTPSKKFINIGLKDEHGNFKQLNTNILQIENELYTQIRPKRKTKDGESLLEALKNRGIEYVEIRSLDVNPFSPIGINKNQILLLDLFLIWCALIDSPKIDKTDFLLTTKNWERIIYEGRKPNQKIYINNNNETKTLIEIGQIIFKDLNEIALILDSNSNDLLYQKACKETQLFLKNPELTYSAQCLNFLMTTGIKKTGLYLANKYHEKFINKNYFNLNQSVLEQEVIRSHQKKIEIEREDILSFEEYIRNK</sequence>
<feature type="chain" id="PRO_0000192520" description="Glutamate--cysteine ligase">
    <location>
        <begin position="1"/>
        <end position="518"/>
    </location>
</feature>
<protein>
    <recommendedName>
        <fullName>Glutamate--cysteine ligase</fullName>
        <ecNumber>6.3.2.2</ecNumber>
    </recommendedName>
    <alternativeName>
        <fullName>Gamma-ECS</fullName>
        <shortName>GCS</shortName>
    </alternativeName>
    <alternativeName>
        <fullName>Gamma-glutamylcysteine synthetase</fullName>
    </alternativeName>
</protein>
<accession>P57485</accession>
<gene>
    <name type="primary">gshA</name>
    <name type="ordered locus">BU407</name>
</gene>